<dbReference type="EC" id="5.3.99.3" evidence="1"/>
<dbReference type="EMBL" id="AY573810">
    <property type="protein sequence ID" value="AAS89038.1"/>
    <property type="molecule type" value="mRNA"/>
</dbReference>
<dbReference type="EMBL" id="AY805116">
    <property type="protein sequence ID" value="AAW83054.1"/>
    <property type="molecule type" value="mRNA"/>
</dbReference>
<dbReference type="RefSeq" id="NP_001270588.1">
    <property type="nucleotide sequence ID" value="NM_001283659.1"/>
</dbReference>
<dbReference type="RefSeq" id="XP_045221405.1">
    <property type="nucleotide sequence ID" value="XM_045365470.2"/>
</dbReference>
<dbReference type="BMRB" id="Q6PWL5"/>
<dbReference type="SMR" id="Q6PWL5"/>
<dbReference type="STRING" id="9541.ENSMFAP00000028375"/>
<dbReference type="Ensembl" id="ENSMFAT00000083615.1">
    <property type="protein sequence ID" value="ENSMFAP00000053375.1"/>
    <property type="gene ID" value="ENSMFAG00000045371.2"/>
</dbReference>
<dbReference type="GeneID" id="102140495"/>
<dbReference type="VEuPathDB" id="HostDB:ENSMFAG00000045371"/>
<dbReference type="eggNOG" id="KOG3158">
    <property type="taxonomic scope" value="Eukaryota"/>
</dbReference>
<dbReference type="GeneTree" id="ENSGT00940000154256"/>
<dbReference type="OMA" id="IEHKVTD"/>
<dbReference type="BRENDA" id="5.3.99.3">
    <property type="organism ID" value="1793"/>
</dbReference>
<dbReference type="UniPathway" id="UPA00662"/>
<dbReference type="Proteomes" id="UP000233100">
    <property type="component" value="Chromosome 11"/>
</dbReference>
<dbReference type="Bgee" id="ENSMFAG00000045371">
    <property type="expression patterns" value="Expressed in lung and 13 other cell types or tissues"/>
</dbReference>
<dbReference type="GO" id="GO:0005829">
    <property type="term" value="C:cytosol"/>
    <property type="evidence" value="ECO:0007669"/>
    <property type="project" value="TreeGrafter"/>
</dbReference>
<dbReference type="GO" id="GO:0005634">
    <property type="term" value="C:nucleus"/>
    <property type="evidence" value="ECO:0007669"/>
    <property type="project" value="TreeGrafter"/>
</dbReference>
<dbReference type="GO" id="GO:0051879">
    <property type="term" value="F:Hsp90 protein binding"/>
    <property type="evidence" value="ECO:0007669"/>
    <property type="project" value="InterPro"/>
</dbReference>
<dbReference type="GO" id="GO:0050220">
    <property type="term" value="F:prostaglandin-E synthase activity"/>
    <property type="evidence" value="ECO:0007669"/>
    <property type="project" value="UniProtKB-EC"/>
</dbReference>
<dbReference type="GO" id="GO:0051087">
    <property type="term" value="F:protein-folding chaperone binding"/>
    <property type="evidence" value="ECO:0007669"/>
    <property type="project" value="TreeGrafter"/>
</dbReference>
<dbReference type="GO" id="GO:0051131">
    <property type="term" value="P:chaperone-mediated protein complex assembly"/>
    <property type="evidence" value="ECO:0007669"/>
    <property type="project" value="TreeGrafter"/>
</dbReference>
<dbReference type="GO" id="GO:0001516">
    <property type="term" value="P:prostaglandin biosynthetic process"/>
    <property type="evidence" value="ECO:0007669"/>
    <property type="project" value="UniProtKB-UniPathway"/>
</dbReference>
<dbReference type="GO" id="GO:0006457">
    <property type="term" value="P:protein folding"/>
    <property type="evidence" value="ECO:0007669"/>
    <property type="project" value="TreeGrafter"/>
</dbReference>
<dbReference type="GO" id="GO:1905323">
    <property type="term" value="P:telomerase holoenzyme complex assembly"/>
    <property type="evidence" value="ECO:0007669"/>
    <property type="project" value="TreeGrafter"/>
</dbReference>
<dbReference type="GO" id="GO:0007004">
    <property type="term" value="P:telomere maintenance via telomerase"/>
    <property type="evidence" value="ECO:0007669"/>
    <property type="project" value="TreeGrafter"/>
</dbReference>
<dbReference type="CDD" id="cd00237">
    <property type="entry name" value="p23"/>
    <property type="match status" value="1"/>
</dbReference>
<dbReference type="FunFam" id="2.60.40.790:FF:000003">
    <property type="entry name" value="prostaglandin E synthase 3"/>
    <property type="match status" value="1"/>
</dbReference>
<dbReference type="Gene3D" id="2.60.40.790">
    <property type="match status" value="1"/>
</dbReference>
<dbReference type="InterPro" id="IPR007052">
    <property type="entry name" value="CS_dom"/>
</dbReference>
<dbReference type="InterPro" id="IPR008978">
    <property type="entry name" value="HSP20-like_chaperone"/>
</dbReference>
<dbReference type="InterPro" id="IPR045250">
    <property type="entry name" value="p23-like"/>
</dbReference>
<dbReference type="PANTHER" id="PTHR22932:SF3">
    <property type="entry name" value="PROSTAGLANDIN E SYNTHASE 3"/>
    <property type="match status" value="1"/>
</dbReference>
<dbReference type="PANTHER" id="PTHR22932">
    <property type="entry name" value="TELOMERASE-BINDING PROTEIN P23 HSP90 CO-CHAPERONE"/>
    <property type="match status" value="1"/>
</dbReference>
<dbReference type="Pfam" id="PF04969">
    <property type="entry name" value="CS"/>
    <property type="match status" value="1"/>
</dbReference>
<dbReference type="SUPFAM" id="SSF49764">
    <property type="entry name" value="HSP20-like chaperones"/>
    <property type="match status" value="1"/>
</dbReference>
<dbReference type="PROSITE" id="PS51203">
    <property type="entry name" value="CS"/>
    <property type="match status" value="1"/>
</dbReference>
<reference key="1">
    <citation type="journal article" date="2005" name="Prostaglandins Other Lipid Mediat.">
        <title>Molecular cloning and tissue distribution of microsomal-1 and cytosolic prostaglandin E synthases in macaque.</title>
        <authorList>
            <person name="Parent J."/>
            <person name="Chapdelaine P."/>
            <person name="Fortier M.A."/>
        </authorList>
    </citation>
    <scope>NUCLEOTIDE SEQUENCE [MRNA]</scope>
    <scope>TISSUE SPECIFICITY</scope>
</reference>
<reference key="2">
    <citation type="journal article" date="2005" name="Hum. Reprod.">
        <title>Microsomal prostaglandin E synthase-1 (mPGES-1) is the primary form of PGES expressed by the primate periovulatory follicle.</title>
        <authorList>
            <person name="Duffy D.M."/>
            <person name="Seachord C.L."/>
            <person name="Dozier B.L."/>
        </authorList>
    </citation>
    <scope>NUCLEOTIDE SEQUENCE [MRNA] OF 17-124</scope>
    <scope>TISSUE SPECIFICITY</scope>
</reference>
<evidence type="ECO:0000250" key="1">
    <source>
        <dbReference type="UniProtKB" id="Q15185"/>
    </source>
</evidence>
<evidence type="ECO:0000250" key="2">
    <source>
        <dbReference type="UniProtKB" id="Q3ZBF7"/>
    </source>
</evidence>
<evidence type="ECO:0000250" key="3">
    <source>
        <dbReference type="UniProtKB" id="Q9R0Q7"/>
    </source>
</evidence>
<evidence type="ECO:0000255" key="4">
    <source>
        <dbReference type="PROSITE-ProRule" id="PRU00547"/>
    </source>
</evidence>
<evidence type="ECO:0000256" key="5">
    <source>
        <dbReference type="SAM" id="MobiDB-lite"/>
    </source>
</evidence>
<evidence type="ECO:0000269" key="6">
    <source>
    </source>
</evidence>
<evidence type="ECO:0000269" key="7">
    <source>
    </source>
</evidence>
<evidence type="ECO:0000305" key="8"/>
<name>TEBP_MACFA</name>
<proteinExistence type="evidence at protein level"/>
<accession>Q6PWL5</accession>
<accession>Q5DI75</accession>
<comment type="function">
    <text evidence="1">Cytosolic prostaglandin synthase that catalyzes the oxidoreduction of prostaglandin endoperoxide H2 (PGH2) to prostaglandin E2 (PGE2). Molecular chaperone that localizes to genomic response elements in a hormone-dependent manner and disrupts receptor-mediated transcriptional activation, by promoting disassembly of transcriptional regulatory complexes. Facilitates HIF alpha proteins hydroxylation via interaction with EGLN1/PHD2, leading to recruit EGLN1/PHD2 to the HSP90 pathway.</text>
</comment>
<comment type="catalytic activity">
    <reaction evidence="1">
        <text>prostaglandin H2 = prostaglandin E2</text>
        <dbReference type="Rhea" id="RHEA:12893"/>
        <dbReference type="ChEBI" id="CHEBI:57405"/>
        <dbReference type="ChEBI" id="CHEBI:606564"/>
        <dbReference type="EC" id="5.3.99.3"/>
    </reaction>
</comment>
<comment type="pathway">
    <text evidence="1">Lipid metabolism; prostaglandin biosynthesis.</text>
</comment>
<comment type="subunit">
    <text evidence="1">Probably forms a complex composed of chaperones HSP90 and HSP70, co-chaperones STIP1/HOP, CDC37, PPP5C, PTGES3/p23, TSC1 and client protein TSC2. Binds to the progesterone receptor. Interacts with TERT; the interaction, together with HSP90AA1, is required for correct assembly and stabilization of the telomerase holoenzyme complex. Interacts (via PXLE motif) with EGLN1/PHD2, recruiting EGLN1/PHD2 to the HSP90 pathway to facilitate HIF alpha proteins hydroxylation. Interacts with HSP90AA1, FLCN, FNIP1 and FNIP2.</text>
</comment>
<comment type="subcellular location">
    <subcellularLocation>
        <location evidence="2">Cytoplasm</location>
    </subcellularLocation>
</comment>
<comment type="tissue specificity">
    <text evidence="6 7">Detected in granulosa cells of periovulatory follicles. Detected at high levels in lung, and at lower levels in endometrium, ovary, myometrium, oviduct and liver (at protein level). Detected in endometrium, myometrium, oviduct and ovary, and at low levels in liver and lung.</text>
</comment>
<comment type="PTM">
    <text evidence="1">Proteolytically cleaved by caspase-7 (CASP7) in response to apoptosis, leading to its inactivation.</text>
</comment>
<comment type="similarity">
    <text evidence="8">Belongs to the p23/wos2 family.</text>
</comment>
<feature type="chain" id="PRO_0000288779" description="Prostaglandin E synthase 3">
    <location>
        <begin position="1"/>
        <end position="160"/>
    </location>
</feature>
<feature type="domain" description="CS" evidence="4">
    <location>
        <begin position="1"/>
        <end position="90"/>
    </location>
</feature>
<feature type="region of interest" description="Disordered" evidence="5">
    <location>
        <begin position="124"/>
        <end position="160"/>
    </location>
</feature>
<feature type="short sequence motif" description="PXLE motif" evidence="1">
    <location>
        <begin position="157"/>
        <end position="160"/>
    </location>
</feature>
<feature type="compositionally biased region" description="Acidic residues" evidence="5">
    <location>
        <begin position="132"/>
        <end position="153"/>
    </location>
</feature>
<feature type="site" description="Cleavage; by caspase-7" evidence="1">
    <location>
        <begin position="142"/>
        <end position="143"/>
    </location>
</feature>
<feature type="modified residue" description="N6-acetyllysine" evidence="1">
    <location>
        <position position="33"/>
    </location>
</feature>
<feature type="modified residue" description="Phosphoserine" evidence="1">
    <location>
        <position position="44"/>
    </location>
</feature>
<feature type="modified residue" description="Phosphoserine" evidence="1">
    <location>
        <position position="85"/>
    </location>
</feature>
<feature type="modified residue" description="Phosphoserine" evidence="3">
    <location>
        <position position="100"/>
    </location>
</feature>
<feature type="modified residue" description="Phosphoserine" evidence="1">
    <location>
        <position position="113"/>
    </location>
</feature>
<feature type="modified residue" description="Phosphoserine" evidence="1">
    <location>
        <position position="118"/>
    </location>
</feature>
<feature type="modified residue" description="Phosphoserine" evidence="1">
    <location>
        <position position="148"/>
    </location>
</feature>
<feature type="modified residue" description="Phosphoserine" evidence="1">
    <location>
        <position position="151"/>
    </location>
</feature>
<feature type="cross-link" description="Glycyl lysine isopeptide (Lys-Gly) (interchain with G-Cter in SUMO2)" evidence="1">
    <location>
        <position position="35"/>
    </location>
</feature>
<feature type="cross-link" description="Glycyl lysine isopeptide (Lys-Gly) (interchain with G-Cter in SUMO2)" evidence="1">
    <location>
        <position position="65"/>
    </location>
</feature>
<gene>
    <name type="primary">PTGES3</name>
</gene>
<keyword id="KW-0007">Acetylation</keyword>
<keyword id="KW-0963">Cytoplasm</keyword>
<keyword id="KW-0275">Fatty acid biosynthesis</keyword>
<keyword id="KW-0276">Fatty acid metabolism</keyword>
<keyword id="KW-0413">Isomerase</keyword>
<keyword id="KW-1017">Isopeptide bond</keyword>
<keyword id="KW-0444">Lipid biosynthesis</keyword>
<keyword id="KW-0443">Lipid metabolism</keyword>
<keyword id="KW-0597">Phosphoprotein</keyword>
<keyword id="KW-0643">Prostaglandin biosynthesis</keyword>
<keyword id="KW-0644">Prostaglandin metabolism</keyword>
<keyword id="KW-1185">Reference proteome</keyword>
<keyword id="KW-0832">Ubl conjugation</keyword>
<sequence length="160" mass="18697">MQPASAKWYDRRDYVFIEFCVEDSKDVNVNFEKSKLTFSCLGGSDNFKHLNEIDLFHCIDPNDSKHKRTDRSILCCLRKGESGQSWPRLTKERAKLNWLSVDFNNWKDWEDDSDEDMSNFDRFSEMMNNMGGDEDVDLPEVDGADDDSQDSDDEKMPDLE</sequence>
<protein>
    <recommendedName>
        <fullName>Prostaglandin E synthase 3</fullName>
        <ecNumber evidence="1">5.3.99.3</ecNumber>
    </recommendedName>
    <alternativeName>
        <fullName>Cytosolic prostaglandin E2 synthase</fullName>
        <shortName>cPGES</shortName>
    </alternativeName>
</protein>
<organism>
    <name type="scientific">Macaca fascicularis</name>
    <name type="common">Crab-eating macaque</name>
    <name type="synonym">Cynomolgus monkey</name>
    <dbReference type="NCBI Taxonomy" id="9541"/>
    <lineage>
        <taxon>Eukaryota</taxon>
        <taxon>Metazoa</taxon>
        <taxon>Chordata</taxon>
        <taxon>Craniata</taxon>
        <taxon>Vertebrata</taxon>
        <taxon>Euteleostomi</taxon>
        <taxon>Mammalia</taxon>
        <taxon>Eutheria</taxon>
        <taxon>Euarchontoglires</taxon>
        <taxon>Primates</taxon>
        <taxon>Haplorrhini</taxon>
        <taxon>Catarrhini</taxon>
        <taxon>Cercopithecidae</taxon>
        <taxon>Cercopithecinae</taxon>
        <taxon>Macaca</taxon>
    </lineage>
</organism>